<comment type="function">
    <text evidence="1">Substrate-recognition component of the CSA complex, a DCX (DDB1-CUL4-X-box) E3 ubiquitin-protein ligase complex, involved in transcription-coupled nucleotide excision repair (TC-NER), a process during which RNA polymerase II-blocking lesions are rapidly removed from the transcribed strand of active genes. Following recruitment to lesion-stalled RNA polymerase II (Pol II), the CSA complex mediates ubiquitination of Pol II subunit POLR2A/RPB1 at 'Lys-1268', a critical TC-NER checkpoint, governing RNA Pol II stability and initiating DNA damage excision by TFIIH recruitment. The CSA complex also promotes the ubiquitination and subsequent proteasomal degradation of ERCC6/CSB in a UV-dependent manner; ERCC6 degradation is essential for the recovery of RNA synthesis after transcription-coupled repair. Also plays a role in DNA double-strand breaks (DSSBs) repair by non-homologous end joining (NHEJ).</text>
</comment>
<comment type="pathway">
    <text evidence="1">Protein modification; protein ubiquitination.</text>
</comment>
<comment type="subunit">
    <text evidence="1">Part of the CSA complex (also named DCX(ERCC8) complex), a DCX E3 ubiquitin-protein ligase complex containing ERCC8, RBX1, DDB1 and CUL4A; the CSA complex interacts with RNA polymerase II; upon UV irradiation it interacts with the COP9 signalosome and preferentially with the hyperphosphorylated form of RNA polymerase II. Interacts with ERCC6/CSB (via CIM motif); promoting recruitment to lesion-stalled RNA polymerase II (Pol II). Interacts with KIAA1530/UVSSA. Interacts with a subunit of RNA polymerase II TFIIH.</text>
</comment>
<comment type="interaction">
    <interactant intactId="EBI-26682118">
        <id>Q8CFD5</id>
    </interactant>
    <interactant intactId="EBI-26666280">
        <id>Q3U4B1</id>
        <label>Ssbp4</label>
    </interactant>
    <organismsDiffer>false</organismsDiffer>
    <experiments>2</experiments>
</comment>
<comment type="subcellular location">
    <subcellularLocation>
        <location evidence="1">Nucleus</location>
    </subcellularLocation>
    <subcellularLocation>
        <location evidence="1">Chromosome</location>
    </subcellularLocation>
    <subcellularLocation>
        <location evidence="1">Nucleus matrix</location>
    </subcellularLocation>
    <text evidence="1">Recruited to lesion-stalled RNA polymerase II (Pol II) sites by ERCC6/CSB. UV-induced translocation to the nuclear matrix is dependent on ERCC6/CSB.</text>
</comment>
<comment type="disruption phenotype">
    <text evidence="2">Ercc8 deficient mice develop normally, but show a loss of retinal photoreceptors after 4 months of age, and enhanced UV-sensitivity.</text>
</comment>
<accession>Q8CFD5</accession>
<accession>Q3U066</accession>
<accession>Q8VDC4</accession>
<accession>Q9CWK7</accession>
<proteinExistence type="evidence at protein level"/>
<gene>
    <name evidence="5" type="primary">Ercc8</name>
    <name type="synonym">Ckn1</name>
    <name evidence="3" type="synonym">Csa</name>
</gene>
<keyword id="KW-0158">Chromosome</keyword>
<keyword id="KW-0227">DNA damage</keyword>
<keyword id="KW-0234">DNA repair</keyword>
<keyword id="KW-0539">Nucleus</keyword>
<keyword id="KW-0597">Phosphoprotein</keyword>
<keyword id="KW-1185">Reference proteome</keyword>
<keyword id="KW-0677">Repeat</keyword>
<keyword id="KW-0833">Ubl conjugation pathway</keyword>
<keyword id="KW-0853">WD repeat</keyword>
<name>ERCC8_MOUSE</name>
<organism>
    <name type="scientific">Mus musculus</name>
    <name type="common">Mouse</name>
    <dbReference type="NCBI Taxonomy" id="10090"/>
    <lineage>
        <taxon>Eukaryota</taxon>
        <taxon>Metazoa</taxon>
        <taxon>Chordata</taxon>
        <taxon>Craniata</taxon>
        <taxon>Vertebrata</taxon>
        <taxon>Euteleostomi</taxon>
        <taxon>Mammalia</taxon>
        <taxon>Eutheria</taxon>
        <taxon>Euarchontoglires</taxon>
        <taxon>Glires</taxon>
        <taxon>Rodentia</taxon>
        <taxon>Myomorpha</taxon>
        <taxon>Muroidea</taxon>
        <taxon>Muridae</taxon>
        <taxon>Murinae</taxon>
        <taxon>Mus</taxon>
        <taxon>Mus</taxon>
    </lineage>
</organism>
<reference key="1">
    <citation type="journal article" date="2002" name="DNA Repair">
        <title>UVB irradiation-induced cancer predisposition in Cockayne syndrome group A (Csa) mutant mice.</title>
        <authorList>
            <person name="van der Horst G.T.J."/>
            <person name="Meira L."/>
            <person name="Gorgels T.G.M.F."/>
            <person name="de Wit J."/>
            <person name="Velasco-Miguel S."/>
            <person name="Richardson J.A."/>
            <person name="Kamp Y."/>
            <person name="Vreeswijk M.P.G."/>
            <person name="Smit B."/>
            <person name="Bootsma D."/>
            <person name="Hoeijmakers J.H.J."/>
            <person name="Friedberg E.C."/>
        </authorList>
    </citation>
    <scope>NUCLEOTIDE SEQUENCE [MRNA]</scope>
    <scope>DISRUPTION PHENOTYPE</scope>
    <source>
        <strain>BALB/cJ</strain>
        <tissue>Testis</tissue>
    </source>
</reference>
<reference key="2">
    <citation type="journal article" date="2005" name="Science">
        <title>The transcriptional landscape of the mammalian genome.</title>
        <authorList>
            <person name="Carninci P."/>
            <person name="Kasukawa T."/>
            <person name="Katayama S."/>
            <person name="Gough J."/>
            <person name="Frith M.C."/>
            <person name="Maeda N."/>
            <person name="Oyama R."/>
            <person name="Ravasi T."/>
            <person name="Lenhard B."/>
            <person name="Wells C."/>
            <person name="Kodzius R."/>
            <person name="Shimokawa K."/>
            <person name="Bajic V.B."/>
            <person name="Brenner S.E."/>
            <person name="Batalov S."/>
            <person name="Forrest A.R."/>
            <person name="Zavolan M."/>
            <person name="Davis M.J."/>
            <person name="Wilming L.G."/>
            <person name="Aidinis V."/>
            <person name="Allen J.E."/>
            <person name="Ambesi-Impiombato A."/>
            <person name="Apweiler R."/>
            <person name="Aturaliya R.N."/>
            <person name="Bailey T.L."/>
            <person name="Bansal M."/>
            <person name="Baxter L."/>
            <person name="Beisel K.W."/>
            <person name="Bersano T."/>
            <person name="Bono H."/>
            <person name="Chalk A.M."/>
            <person name="Chiu K.P."/>
            <person name="Choudhary V."/>
            <person name="Christoffels A."/>
            <person name="Clutterbuck D.R."/>
            <person name="Crowe M.L."/>
            <person name="Dalla E."/>
            <person name="Dalrymple B.P."/>
            <person name="de Bono B."/>
            <person name="Della Gatta G."/>
            <person name="di Bernardo D."/>
            <person name="Down T."/>
            <person name="Engstrom P."/>
            <person name="Fagiolini M."/>
            <person name="Faulkner G."/>
            <person name="Fletcher C.F."/>
            <person name="Fukushima T."/>
            <person name="Furuno M."/>
            <person name="Futaki S."/>
            <person name="Gariboldi M."/>
            <person name="Georgii-Hemming P."/>
            <person name="Gingeras T.R."/>
            <person name="Gojobori T."/>
            <person name="Green R.E."/>
            <person name="Gustincich S."/>
            <person name="Harbers M."/>
            <person name="Hayashi Y."/>
            <person name="Hensch T.K."/>
            <person name="Hirokawa N."/>
            <person name="Hill D."/>
            <person name="Huminiecki L."/>
            <person name="Iacono M."/>
            <person name="Ikeo K."/>
            <person name="Iwama A."/>
            <person name="Ishikawa T."/>
            <person name="Jakt M."/>
            <person name="Kanapin A."/>
            <person name="Katoh M."/>
            <person name="Kawasawa Y."/>
            <person name="Kelso J."/>
            <person name="Kitamura H."/>
            <person name="Kitano H."/>
            <person name="Kollias G."/>
            <person name="Krishnan S.P."/>
            <person name="Kruger A."/>
            <person name="Kummerfeld S.K."/>
            <person name="Kurochkin I.V."/>
            <person name="Lareau L.F."/>
            <person name="Lazarevic D."/>
            <person name="Lipovich L."/>
            <person name="Liu J."/>
            <person name="Liuni S."/>
            <person name="McWilliam S."/>
            <person name="Madan Babu M."/>
            <person name="Madera M."/>
            <person name="Marchionni L."/>
            <person name="Matsuda H."/>
            <person name="Matsuzawa S."/>
            <person name="Miki H."/>
            <person name="Mignone F."/>
            <person name="Miyake S."/>
            <person name="Morris K."/>
            <person name="Mottagui-Tabar S."/>
            <person name="Mulder N."/>
            <person name="Nakano N."/>
            <person name="Nakauchi H."/>
            <person name="Ng P."/>
            <person name="Nilsson R."/>
            <person name="Nishiguchi S."/>
            <person name="Nishikawa S."/>
            <person name="Nori F."/>
            <person name="Ohara O."/>
            <person name="Okazaki Y."/>
            <person name="Orlando V."/>
            <person name="Pang K.C."/>
            <person name="Pavan W.J."/>
            <person name="Pavesi G."/>
            <person name="Pesole G."/>
            <person name="Petrovsky N."/>
            <person name="Piazza S."/>
            <person name="Reed J."/>
            <person name="Reid J.F."/>
            <person name="Ring B.Z."/>
            <person name="Ringwald M."/>
            <person name="Rost B."/>
            <person name="Ruan Y."/>
            <person name="Salzberg S.L."/>
            <person name="Sandelin A."/>
            <person name="Schneider C."/>
            <person name="Schoenbach C."/>
            <person name="Sekiguchi K."/>
            <person name="Semple C.A."/>
            <person name="Seno S."/>
            <person name="Sessa L."/>
            <person name="Sheng Y."/>
            <person name="Shibata Y."/>
            <person name="Shimada H."/>
            <person name="Shimada K."/>
            <person name="Silva D."/>
            <person name="Sinclair B."/>
            <person name="Sperling S."/>
            <person name="Stupka E."/>
            <person name="Sugiura K."/>
            <person name="Sultana R."/>
            <person name="Takenaka Y."/>
            <person name="Taki K."/>
            <person name="Tammoja K."/>
            <person name="Tan S.L."/>
            <person name="Tang S."/>
            <person name="Taylor M.S."/>
            <person name="Tegner J."/>
            <person name="Teichmann S.A."/>
            <person name="Ueda H.R."/>
            <person name="van Nimwegen E."/>
            <person name="Verardo R."/>
            <person name="Wei C.L."/>
            <person name="Yagi K."/>
            <person name="Yamanishi H."/>
            <person name="Zabarovsky E."/>
            <person name="Zhu S."/>
            <person name="Zimmer A."/>
            <person name="Hide W."/>
            <person name="Bult C."/>
            <person name="Grimmond S.M."/>
            <person name="Teasdale R.D."/>
            <person name="Liu E.T."/>
            <person name="Brusic V."/>
            <person name="Quackenbush J."/>
            <person name="Wahlestedt C."/>
            <person name="Mattick J.S."/>
            <person name="Hume D.A."/>
            <person name="Kai C."/>
            <person name="Sasaki D."/>
            <person name="Tomaru Y."/>
            <person name="Fukuda S."/>
            <person name="Kanamori-Katayama M."/>
            <person name="Suzuki M."/>
            <person name="Aoki J."/>
            <person name="Arakawa T."/>
            <person name="Iida J."/>
            <person name="Imamura K."/>
            <person name="Itoh M."/>
            <person name="Kato T."/>
            <person name="Kawaji H."/>
            <person name="Kawagashira N."/>
            <person name="Kawashima T."/>
            <person name="Kojima M."/>
            <person name="Kondo S."/>
            <person name="Konno H."/>
            <person name="Nakano K."/>
            <person name="Ninomiya N."/>
            <person name="Nishio T."/>
            <person name="Okada M."/>
            <person name="Plessy C."/>
            <person name="Shibata K."/>
            <person name="Shiraki T."/>
            <person name="Suzuki S."/>
            <person name="Tagami M."/>
            <person name="Waki K."/>
            <person name="Watahiki A."/>
            <person name="Okamura-Oho Y."/>
            <person name="Suzuki H."/>
            <person name="Kawai J."/>
            <person name="Hayashizaki Y."/>
        </authorList>
    </citation>
    <scope>NUCLEOTIDE SEQUENCE [LARGE SCALE MRNA]</scope>
    <source>
        <strain>C57BL/6J</strain>
        <strain>NOD</strain>
        <tissue>Spleen</tissue>
    </source>
</reference>
<reference key="3">
    <citation type="journal article" date="2004" name="Genome Res.">
        <title>The status, quality, and expansion of the NIH full-length cDNA project: the Mammalian Gene Collection (MGC).</title>
        <authorList>
            <consortium name="The MGC Project Team"/>
        </authorList>
    </citation>
    <scope>NUCLEOTIDE SEQUENCE [LARGE SCALE MRNA]</scope>
    <source>
        <strain>FVB/N</strain>
        <tissue>Mammary tumor</tissue>
    </source>
</reference>
<protein>
    <recommendedName>
        <fullName>DNA excision repair protein ERCC-8</fullName>
    </recommendedName>
    <alternativeName>
        <fullName>Cockayne syndrome WD repeat protein CSA homolog</fullName>
    </alternativeName>
</protein>
<dbReference type="EMBL" id="AJ427222">
    <property type="protein sequence ID" value="CAD20255.1"/>
    <property type="molecule type" value="mRNA"/>
</dbReference>
<dbReference type="EMBL" id="AK010576">
    <property type="protein sequence ID" value="BAB27039.1"/>
    <property type="molecule type" value="mRNA"/>
</dbReference>
<dbReference type="EMBL" id="AK157175">
    <property type="protein sequence ID" value="BAE33989.1"/>
    <property type="molecule type" value="mRNA"/>
</dbReference>
<dbReference type="EMBL" id="BC037200">
    <property type="protein sequence ID" value="AAH37200.1"/>
    <property type="molecule type" value="mRNA"/>
</dbReference>
<dbReference type="CCDS" id="CCDS26761.1"/>
<dbReference type="RefSeq" id="NP_082318.2">
    <property type="nucleotide sequence ID" value="NM_028042.4"/>
</dbReference>
<dbReference type="SMR" id="Q8CFD5"/>
<dbReference type="BioGRID" id="215079">
    <property type="interactions" value="10"/>
</dbReference>
<dbReference type="FunCoup" id="Q8CFD5">
    <property type="interactions" value="2206"/>
</dbReference>
<dbReference type="IntAct" id="Q8CFD5">
    <property type="interactions" value="12"/>
</dbReference>
<dbReference type="STRING" id="10090.ENSMUSP00000059211"/>
<dbReference type="PhosphoSitePlus" id="Q8CFD5"/>
<dbReference type="PaxDb" id="10090-ENSMUSP00000059211"/>
<dbReference type="ProteomicsDB" id="275939"/>
<dbReference type="Antibodypedia" id="11400">
    <property type="antibodies" value="350 antibodies from 26 providers"/>
</dbReference>
<dbReference type="Ensembl" id="ENSMUST00000054835.15">
    <property type="protein sequence ID" value="ENSMUSP00000059211.9"/>
    <property type="gene ID" value="ENSMUSG00000021694.19"/>
</dbReference>
<dbReference type="GeneID" id="71991"/>
<dbReference type="KEGG" id="mmu:71991"/>
<dbReference type="UCSC" id="uc007rux.1">
    <property type="organism name" value="mouse"/>
</dbReference>
<dbReference type="AGR" id="MGI:1919241"/>
<dbReference type="CTD" id="1161"/>
<dbReference type="MGI" id="MGI:1919241">
    <property type="gene designation" value="Ercc8"/>
</dbReference>
<dbReference type="VEuPathDB" id="HostDB:ENSMUSG00000021694"/>
<dbReference type="eggNOG" id="KOG4283">
    <property type="taxonomic scope" value="Eukaryota"/>
</dbReference>
<dbReference type="GeneTree" id="ENSGT00390000009065"/>
<dbReference type="HOGENOM" id="CLU_032951_2_2_1"/>
<dbReference type="InParanoid" id="Q8CFD5"/>
<dbReference type="OMA" id="WIPAPRE"/>
<dbReference type="OrthoDB" id="361494at2759"/>
<dbReference type="PhylomeDB" id="Q8CFD5"/>
<dbReference type="TreeFam" id="TF101237"/>
<dbReference type="Reactome" id="R-MMU-6781823">
    <property type="pathway name" value="Formation of TC-NER Pre-Incision Complex"/>
</dbReference>
<dbReference type="Reactome" id="R-MMU-6782135">
    <property type="pathway name" value="Dual incision in TC-NER"/>
</dbReference>
<dbReference type="Reactome" id="R-MMU-6782210">
    <property type="pathway name" value="Gap-filling DNA repair synthesis and ligation in TC-NER"/>
</dbReference>
<dbReference type="Reactome" id="R-MMU-8951664">
    <property type="pathway name" value="Neddylation"/>
</dbReference>
<dbReference type="UniPathway" id="UPA00143"/>
<dbReference type="BioGRID-ORCS" id="71991">
    <property type="hits" value="1 hit in 112 CRISPR screens"/>
</dbReference>
<dbReference type="PRO" id="PR:Q8CFD5"/>
<dbReference type="Proteomes" id="UP000000589">
    <property type="component" value="Chromosome 13"/>
</dbReference>
<dbReference type="RNAct" id="Q8CFD5">
    <property type="molecule type" value="protein"/>
</dbReference>
<dbReference type="Bgee" id="ENSMUSG00000021694">
    <property type="expression patterns" value="Expressed in spermatocyte and 199 other cell types or tissues"/>
</dbReference>
<dbReference type="ExpressionAtlas" id="Q8CFD5">
    <property type="expression patterns" value="baseline and differential"/>
</dbReference>
<dbReference type="GO" id="GO:0080008">
    <property type="term" value="C:Cul4-RING E3 ubiquitin ligase complex"/>
    <property type="evidence" value="ECO:0000250"/>
    <property type="project" value="UniProtKB"/>
</dbReference>
<dbReference type="GO" id="GO:0031464">
    <property type="term" value="C:Cul4A-RING E3 ubiquitin ligase complex"/>
    <property type="evidence" value="ECO:0007669"/>
    <property type="project" value="Ensembl"/>
</dbReference>
<dbReference type="GO" id="GO:0016363">
    <property type="term" value="C:nuclear matrix"/>
    <property type="evidence" value="ECO:0000250"/>
    <property type="project" value="UniProtKB"/>
</dbReference>
<dbReference type="GO" id="GO:0000109">
    <property type="term" value="C:nucleotide-excision repair complex"/>
    <property type="evidence" value="ECO:0000266"/>
    <property type="project" value="MGI"/>
</dbReference>
<dbReference type="GO" id="GO:0005634">
    <property type="term" value="C:nucleus"/>
    <property type="evidence" value="ECO:0000250"/>
    <property type="project" value="UniProtKB"/>
</dbReference>
<dbReference type="GO" id="GO:0043204">
    <property type="term" value="C:perikaryon"/>
    <property type="evidence" value="ECO:0007669"/>
    <property type="project" value="Ensembl"/>
</dbReference>
<dbReference type="GO" id="GO:0090734">
    <property type="term" value="C:site of DNA damage"/>
    <property type="evidence" value="ECO:0000250"/>
    <property type="project" value="UniProtKB"/>
</dbReference>
<dbReference type="GO" id="GO:1990756">
    <property type="term" value="F:ubiquitin-like ligase-substrate adaptor activity"/>
    <property type="evidence" value="ECO:0007669"/>
    <property type="project" value="Ensembl"/>
</dbReference>
<dbReference type="GO" id="GO:0097680">
    <property type="term" value="P:double-strand break repair via classical nonhomologous end joining"/>
    <property type="evidence" value="ECO:0000250"/>
    <property type="project" value="UniProtKB"/>
</dbReference>
<dbReference type="GO" id="GO:0043161">
    <property type="term" value="P:proteasome-mediated ubiquitin-dependent protein catabolic process"/>
    <property type="evidence" value="ECO:0007669"/>
    <property type="project" value="Ensembl"/>
</dbReference>
<dbReference type="GO" id="GO:0051865">
    <property type="term" value="P:protein autoubiquitination"/>
    <property type="evidence" value="ECO:0007669"/>
    <property type="project" value="Ensembl"/>
</dbReference>
<dbReference type="GO" id="GO:0000209">
    <property type="term" value="P:protein polyubiquitination"/>
    <property type="evidence" value="ECO:0007669"/>
    <property type="project" value="Ensembl"/>
</dbReference>
<dbReference type="GO" id="GO:0090262">
    <property type="term" value="P:regulation of transcription-coupled nucleotide-excision repair"/>
    <property type="evidence" value="ECO:0007669"/>
    <property type="project" value="Ensembl"/>
</dbReference>
<dbReference type="GO" id="GO:0010996">
    <property type="term" value="P:response to auditory stimulus"/>
    <property type="evidence" value="ECO:0007669"/>
    <property type="project" value="Ensembl"/>
</dbReference>
<dbReference type="GO" id="GO:0006979">
    <property type="term" value="P:response to oxidative stress"/>
    <property type="evidence" value="ECO:0007669"/>
    <property type="project" value="Ensembl"/>
</dbReference>
<dbReference type="GO" id="GO:0009411">
    <property type="term" value="P:response to UV"/>
    <property type="evidence" value="ECO:0000315"/>
    <property type="project" value="MGI"/>
</dbReference>
<dbReference type="GO" id="GO:0010165">
    <property type="term" value="P:response to X-ray"/>
    <property type="evidence" value="ECO:0000315"/>
    <property type="project" value="MGI"/>
</dbReference>
<dbReference type="GO" id="GO:0000012">
    <property type="term" value="P:single strand break repair"/>
    <property type="evidence" value="ECO:0000250"/>
    <property type="project" value="UniProtKB"/>
</dbReference>
<dbReference type="GO" id="GO:0006283">
    <property type="term" value="P:transcription-coupled nucleotide-excision repair"/>
    <property type="evidence" value="ECO:0000250"/>
    <property type="project" value="UniProtKB"/>
</dbReference>
<dbReference type="FunFam" id="2.130.10.10:FF:000130">
    <property type="entry name" value="DNA excision repair protein ERCC-8"/>
    <property type="match status" value="1"/>
</dbReference>
<dbReference type="Gene3D" id="2.130.10.10">
    <property type="entry name" value="YVTN repeat-like/Quinoprotein amine dehydrogenase"/>
    <property type="match status" value="1"/>
</dbReference>
<dbReference type="InterPro" id="IPR020472">
    <property type="entry name" value="G-protein_beta_WD-40_rep"/>
</dbReference>
<dbReference type="InterPro" id="IPR042238">
    <property type="entry name" value="Rad28/ERCC8/Ckn1/ATCSA-1"/>
</dbReference>
<dbReference type="InterPro" id="IPR015943">
    <property type="entry name" value="WD40/YVTN_repeat-like_dom_sf"/>
</dbReference>
<dbReference type="InterPro" id="IPR019775">
    <property type="entry name" value="WD40_repeat_CS"/>
</dbReference>
<dbReference type="InterPro" id="IPR036322">
    <property type="entry name" value="WD40_repeat_dom_sf"/>
</dbReference>
<dbReference type="InterPro" id="IPR001680">
    <property type="entry name" value="WD40_rpt"/>
</dbReference>
<dbReference type="PANTHER" id="PTHR46202">
    <property type="entry name" value="DNA EXCISION REPAIR PROTEIN ERCC-8"/>
    <property type="match status" value="1"/>
</dbReference>
<dbReference type="PANTHER" id="PTHR46202:SF1">
    <property type="entry name" value="DNA EXCISION REPAIR PROTEIN ERCC-8"/>
    <property type="match status" value="1"/>
</dbReference>
<dbReference type="Pfam" id="PF00400">
    <property type="entry name" value="WD40"/>
    <property type="match status" value="4"/>
</dbReference>
<dbReference type="PRINTS" id="PR00320">
    <property type="entry name" value="GPROTEINBRPT"/>
</dbReference>
<dbReference type="SMART" id="SM00320">
    <property type="entry name" value="WD40"/>
    <property type="match status" value="5"/>
</dbReference>
<dbReference type="SUPFAM" id="SSF50978">
    <property type="entry name" value="WD40 repeat-like"/>
    <property type="match status" value="1"/>
</dbReference>
<dbReference type="PROSITE" id="PS00678">
    <property type="entry name" value="WD_REPEATS_1"/>
    <property type="match status" value="2"/>
</dbReference>
<dbReference type="PROSITE" id="PS50082">
    <property type="entry name" value="WD_REPEATS_2"/>
    <property type="match status" value="5"/>
</dbReference>
<dbReference type="PROSITE" id="PS50294">
    <property type="entry name" value="WD_REPEATS_REGION"/>
    <property type="match status" value="1"/>
</dbReference>
<feature type="chain" id="PRO_0000050971" description="DNA excision repair protein ERCC-8">
    <location>
        <begin position="1"/>
        <end position="397"/>
    </location>
</feature>
<feature type="repeat" description="WD 1">
    <location>
        <begin position="41"/>
        <end position="81"/>
    </location>
</feature>
<feature type="repeat" description="WD 2">
    <location>
        <begin position="97"/>
        <end position="137"/>
    </location>
</feature>
<feature type="repeat" description="WD 3">
    <location>
        <begin position="184"/>
        <end position="224"/>
    </location>
</feature>
<feature type="repeat" description="WD 4">
    <location>
        <begin position="243"/>
        <end position="282"/>
    </location>
</feature>
<feature type="repeat" description="WD 5">
    <location>
        <begin position="332"/>
        <end position="371"/>
    </location>
</feature>
<feature type="modified residue" description="Phosphoserine" evidence="1">
    <location>
        <position position="391"/>
    </location>
</feature>
<feature type="modified residue" description="Phosphoserine" evidence="1">
    <location>
        <position position="392"/>
    </location>
</feature>
<feature type="modified residue" description="Phosphoserine" evidence="1">
    <location>
        <position position="393"/>
    </location>
</feature>
<feature type="sequence conflict" description="In Ref. 3; AAH37200." evidence="4" ref="3">
    <original>V</original>
    <variation>I</variation>
    <location>
        <position position="90"/>
    </location>
</feature>
<feature type="sequence conflict" description="In Ref. 2; BAB27039." evidence="4" ref="2">
    <original>R</original>
    <variation>M</variation>
    <location>
        <position position="292"/>
    </location>
</feature>
<evidence type="ECO:0000250" key="1">
    <source>
        <dbReference type="UniProtKB" id="Q13216"/>
    </source>
</evidence>
<evidence type="ECO:0000269" key="2">
    <source>
    </source>
</evidence>
<evidence type="ECO:0000303" key="3">
    <source>
    </source>
</evidence>
<evidence type="ECO:0000305" key="4"/>
<evidence type="ECO:0000312" key="5">
    <source>
        <dbReference type="MGI" id="MGI:1919241"/>
    </source>
</evidence>
<sequence length="397" mass="43689">MLSFLSARQSGLEDPLRLRRAQSTRRVLGLELNKDRDVERIHGSGVNTLDIEPVEGRYMLSGGSDGVVVLYDLENASRQPHYTCKAVCSVGRSHPDVHKYSVETVQWYPHDTGMFTSSSFDKTLKVWDTNTLQAADVFNFEETVYSHHMSPAATKHCLVAVGTRGPKVQLCDLKSGSCSHILQGHRQEILAVSWSPRHDYILATASADSRVKLWDVRRASGCLLTLDQHNGKKSQAAESANTAHNGKVNGLCFTSDGLHLLTIGTDNRMRLWNSSSGDNTLVNYGKVCNDSRKGLQFAVSCGCSSEFVFVPHGSTIAVYAVHSGERLAMLKGHYKSVDCCVFQPNFQELYSGSRDCNILAWVPPSYEPVPDDDDEAPAKSQLNPAFADAWSSSDEDG</sequence>